<dbReference type="EC" id="3.1.13.-" evidence="1"/>
<dbReference type="EMBL" id="AE008384">
    <property type="protein sequence ID" value="AAM32319.1"/>
    <property type="molecule type" value="Genomic_DNA"/>
</dbReference>
<dbReference type="RefSeq" id="WP_011034536.1">
    <property type="nucleotide sequence ID" value="NC_003901.1"/>
</dbReference>
<dbReference type="SMR" id="Q8PTT8"/>
<dbReference type="GeneID" id="82161708"/>
<dbReference type="KEGG" id="mma:MM_2623"/>
<dbReference type="PATRIC" id="fig|192952.21.peg.3017"/>
<dbReference type="eggNOG" id="arCOG01575">
    <property type="taxonomic scope" value="Archaea"/>
</dbReference>
<dbReference type="HOGENOM" id="CLU_541452_0_0_2"/>
<dbReference type="Proteomes" id="UP000000595">
    <property type="component" value="Chromosome"/>
</dbReference>
<dbReference type="GO" id="GO:0000177">
    <property type="term" value="C:cytoplasmic exosome (RNase complex)"/>
    <property type="evidence" value="ECO:0007669"/>
    <property type="project" value="TreeGrafter"/>
</dbReference>
<dbReference type="GO" id="GO:0000175">
    <property type="term" value="F:3'-5'-RNA exonuclease activity"/>
    <property type="evidence" value="ECO:0007669"/>
    <property type="project" value="UniProtKB-UniRule"/>
</dbReference>
<dbReference type="GO" id="GO:0003723">
    <property type="term" value="F:RNA binding"/>
    <property type="evidence" value="ECO:0007669"/>
    <property type="project" value="TreeGrafter"/>
</dbReference>
<dbReference type="GO" id="GO:0010467">
    <property type="term" value="P:gene expression"/>
    <property type="evidence" value="ECO:0007669"/>
    <property type="project" value="UniProtKB-ARBA"/>
</dbReference>
<dbReference type="GO" id="GO:0016075">
    <property type="term" value="P:rRNA catabolic process"/>
    <property type="evidence" value="ECO:0007669"/>
    <property type="project" value="TreeGrafter"/>
</dbReference>
<dbReference type="CDD" id="cd11366">
    <property type="entry name" value="RNase_PH_archRRP41"/>
    <property type="match status" value="1"/>
</dbReference>
<dbReference type="FunFam" id="3.30.230.70:FF:000004">
    <property type="entry name" value="Exosome complex component Rrp41"/>
    <property type="match status" value="1"/>
</dbReference>
<dbReference type="Gene3D" id="3.30.230.70">
    <property type="entry name" value="GHMP Kinase, N-terminal domain"/>
    <property type="match status" value="1"/>
</dbReference>
<dbReference type="HAMAP" id="MF_00591">
    <property type="entry name" value="Exosome_Rrp41"/>
    <property type="match status" value="1"/>
</dbReference>
<dbReference type="InterPro" id="IPR001247">
    <property type="entry name" value="ExoRNase_PH_dom1"/>
</dbReference>
<dbReference type="InterPro" id="IPR015847">
    <property type="entry name" value="ExoRNase_PH_dom2"/>
</dbReference>
<dbReference type="InterPro" id="IPR036345">
    <property type="entry name" value="ExoRNase_PH_dom2_sf"/>
</dbReference>
<dbReference type="InterPro" id="IPR027408">
    <property type="entry name" value="PNPase/RNase_PH_dom_sf"/>
</dbReference>
<dbReference type="InterPro" id="IPR020568">
    <property type="entry name" value="Ribosomal_Su5_D2-typ_SF"/>
</dbReference>
<dbReference type="InterPro" id="IPR050080">
    <property type="entry name" value="RNase_PH"/>
</dbReference>
<dbReference type="InterPro" id="IPR011807">
    <property type="entry name" value="Rrp41"/>
</dbReference>
<dbReference type="NCBIfam" id="TIGR02065">
    <property type="entry name" value="ECX1"/>
    <property type="match status" value="1"/>
</dbReference>
<dbReference type="PANTHER" id="PTHR11953">
    <property type="entry name" value="EXOSOME COMPLEX COMPONENT"/>
    <property type="match status" value="1"/>
</dbReference>
<dbReference type="PANTHER" id="PTHR11953:SF0">
    <property type="entry name" value="EXOSOME COMPLEX COMPONENT RRP41"/>
    <property type="match status" value="1"/>
</dbReference>
<dbReference type="Pfam" id="PF01138">
    <property type="entry name" value="RNase_PH"/>
    <property type="match status" value="1"/>
</dbReference>
<dbReference type="Pfam" id="PF03725">
    <property type="entry name" value="RNase_PH_C"/>
    <property type="match status" value="1"/>
</dbReference>
<dbReference type="SUPFAM" id="SSF55666">
    <property type="entry name" value="Ribonuclease PH domain 2-like"/>
    <property type="match status" value="1"/>
</dbReference>
<dbReference type="SUPFAM" id="SSF54211">
    <property type="entry name" value="Ribosomal protein S5 domain 2-like"/>
    <property type="match status" value="1"/>
</dbReference>
<comment type="function">
    <text evidence="1">Catalytic component of the exosome, which is a complex involved in RNA degradation. Has 3'-&gt;5' exoribonuclease activity. Can also synthesize heteromeric RNA-tails.</text>
</comment>
<comment type="subunit">
    <text evidence="1">Component of the archaeal exosome complex. Forms a hexameric ring-like arrangement composed of 3 Rrp41-Rrp42 heterodimers. The hexameric ring associates with a trimer of Rrp4 and/or Csl4 subunits.</text>
</comment>
<comment type="subcellular location">
    <subcellularLocation>
        <location evidence="1">Cytoplasm</location>
    </subcellularLocation>
</comment>
<comment type="similarity">
    <text evidence="1">Belongs to the RNase PH family. Rrp41 subfamily.</text>
</comment>
<accession>Q8PTT8</accession>
<keyword id="KW-0963">Cytoplasm</keyword>
<keyword id="KW-0269">Exonuclease</keyword>
<keyword id="KW-0271">Exosome</keyword>
<keyword id="KW-0378">Hydrolase</keyword>
<keyword id="KW-0540">Nuclease</keyword>
<name>RRP41_METMA</name>
<protein>
    <recommendedName>
        <fullName evidence="1">Exosome complex component Rrp41</fullName>
        <ecNumber evidence="1">3.1.13.-</ecNumber>
    </recommendedName>
</protein>
<organism>
    <name type="scientific">Methanosarcina mazei (strain ATCC BAA-159 / DSM 3647 / Goe1 / Go1 / JCM 11833 / OCM 88)</name>
    <name type="common">Methanosarcina frisia</name>
    <dbReference type="NCBI Taxonomy" id="192952"/>
    <lineage>
        <taxon>Archaea</taxon>
        <taxon>Methanobacteriati</taxon>
        <taxon>Methanobacteriota</taxon>
        <taxon>Stenosarchaea group</taxon>
        <taxon>Methanomicrobia</taxon>
        <taxon>Methanosarcinales</taxon>
        <taxon>Methanosarcinaceae</taxon>
        <taxon>Methanosarcina</taxon>
    </lineage>
</organism>
<feature type="chain" id="PRO_0000139983" description="Exosome complex component Rrp41">
    <location>
        <begin position="1"/>
        <end position="493"/>
    </location>
</feature>
<feature type="region of interest" description="Disordered" evidence="2">
    <location>
        <begin position="244"/>
        <end position="264"/>
    </location>
</feature>
<feature type="region of interest" description="Disordered" evidence="2">
    <location>
        <begin position="291"/>
        <end position="493"/>
    </location>
</feature>
<feature type="compositionally biased region" description="Basic and acidic residues" evidence="2">
    <location>
        <begin position="249"/>
        <end position="259"/>
    </location>
</feature>
<feature type="compositionally biased region" description="Acidic residues" evidence="2">
    <location>
        <begin position="297"/>
        <end position="377"/>
    </location>
</feature>
<feature type="compositionally biased region" description="Basic and acidic residues" evidence="2">
    <location>
        <begin position="383"/>
        <end position="400"/>
    </location>
</feature>
<feature type="compositionally biased region" description="Acidic residues" evidence="2">
    <location>
        <begin position="401"/>
        <end position="471"/>
    </location>
</feature>
<feature type="compositionally biased region" description="Basic and acidic residues" evidence="2">
    <location>
        <begin position="472"/>
        <end position="493"/>
    </location>
</feature>
<proteinExistence type="inferred from homology"/>
<reference key="1">
    <citation type="journal article" date="2002" name="J. Mol. Microbiol. Biotechnol.">
        <title>The genome of Methanosarcina mazei: evidence for lateral gene transfer between Bacteria and Archaea.</title>
        <authorList>
            <person name="Deppenmeier U."/>
            <person name="Johann A."/>
            <person name="Hartsch T."/>
            <person name="Merkl R."/>
            <person name="Schmitz R.A."/>
            <person name="Martinez-Arias R."/>
            <person name="Henne A."/>
            <person name="Wiezer A."/>
            <person name="Baeumer S."/>
            <person name="Jacobi C."/>
            <person name="Brueggemann H."/>
            <person name="Lienard T."/>
            <person name="Christmann A."/>
            <person name="Boemecke M."/>
            <person name="Steckel S."/>
            <person name="Bhattacharyya A."/>
            <person name="Lykidis A."/>
            <person name="Overbeek R."/>
            <person name="Klenk H.-P."/>
            <person name="Gunsalus R.P."/>
            <person name="Fritz H.-J."/>
            <person name="Gottschalk G."/>
        </authorList>
    </citation>
    <scope>NUCLEOTIDE SEQUENCE [LARGE SCALE GENOMIC DNA]</scope>
    <source>
        <strain>ATCC BAA-159 / DSM 3647 / Goe1 / Go1 / JCM 11833 / OCM 88</strain>
    </source>
</reference>
<gene>
    <name evidence="1" type="primary">rrp41</name>
    <name type="ordered locus">MM_2623</name>
</gene>
<sequence>MSNKPENLTLITDDGLRLDGRRADEIRPMKIEVGVLSRADGSCYLEWGRNKILVGVFGPREAHPRRSQRADSAVIRYRYNMASFSVEDRARPGPSRRSIEISKVSREAFEPVIMAELFPKTAIDIFVEVLQADAGTRTAAINASSIALADAGIPMKGLITSCAFGKVDGKIVLDLNKEEDNYGEADFPVAMTQDGEITLIQMDGNLTPDEIKQGLELVKKGCKEILEIQQAVLRKKFETPVEEVSEETAPEKGAEKEVLEPSPVAAIVEETPEEAEEPEVEISEEVEAEILASEVIPDFEDELEEEIEEELEESEEDLETEEEEFEEEALEEEAEPEEDLEEDLEEDLGEELEEEEEELEEEEFEEEALEEETELEASLECAPELKEFDEIEARLEKEDASIEAEEEIEPEAEEATEEGLEEEAEIEETAASEEENIEAEAEAEEEAEPEVEAEEISTEAEEAEEEPEEEKSEGPWKVVKDPSEAGTRGEKDE</sequence>
<evidence type="ECO:0000255" key="1">
    <source>
        <dbReference type="HAMAP-Rule" id="MF_00591"/>
    </source>
</evidence>
<evidence type="ECO:0000256" key="2">
    <source>
        <dbReference type="SAM" id="MobiDB-lite"/>
    </source>
</evidence>